<keyword id="KW-1003">Cell membrane</keyword>
<keyword id="KW-0444">Lipid biosynthesis</keyword>
<keyword id="KW-0443">Lipid metabolism</keyword>
<keyword id="KW-0472">Membrane</keyword>
<keyword id="KW-0594">Phospholipid biosynthesis</keyword>
<keyword id="KW-1208">Phospholipid metabolism</keyword>
<keyword id="KW-1185">Reference proteome</keyword>
<keyword id="KW-0808">Transferase</keyword>
<keyword id="KW-0812">Transmembrane</keyword>
<keyword id="KW-1133">Transmembrane helix</keyword>
<sequence>MNYLYLIILGIVCYFIGNISGSIAISKLVYKQDIRNYGSKNAGATNALRVYGVKVGLATFLIDFFKGLLCAYLGFKFYGSLGILVCGLLCVIGHILPVLYNFKGGKGIATSFGVLLFAQPLQVLILLILFLIVVLMTKYVSLGSVLGCISAVIYGLIYIRKDFYIGLIYILLGIISLFKHRSNINRLIHGKESKLGKN</sequence>
<gene>
    <name evidence="1" type="primary">plsY</name>
    <name type="ordered locus">FMG_0853</name>
</gene>
<name>PLSY_FINM2</name>
<comment type="function">
    <text evidence="1">Catalyzes the transfer of an acyl group from acyl-phosphate (acyl-PO(4)) to glycerol-3-phosphate (G3P) to form lysophosphatidic acid (LPA). This enzyme utilizes acyl-phosphate as fatty acyl donor, but not acyl-CoA or acyl-ACP.</text>
</comment>
<comment type="catalytic activity">
    <reaction evidence="1">
        <text>an acyl phosphate + sn-glycerol 3-phosphate = a 1-acyl-sn-glycero-3-phosphate + phosphate</text>
        <dbReference type="Rhea" id="RHEA:34075"/>
        <dbReference type="ChEBI" id="CHEBI:43474"/>
        <dbReference type="ChEBI" id="CHEBI:57597"/>
        <dbReference type="ChEBI" id="CHEBI:57970"/>
        <dbReference type="ChEBI" id="CHEBI:59918"/>
        <dbReference type="EC" id="2.3.1.275"/>
    </reaction>
</comment>
<comment type="pathway">
    <text evidence="1">Lipid metabolism; phospholipid metabolism.</text>
</comment>
<comment type="subunit">
    <text evidence="1">Probably interacts with PlsX.</text>
</comment>
<comment type="subcellular location">
    <subcellularLocation>
        <location evidence="1">Cell membrane</location>
        <topology evidence="1">Multi-pass membrane protein</topology>
    </subcellularLocation>
</comment>
<comment type="similarity">
    <text evidence="1">Belongs to the PlsY family.</text>
</comment>
<dbReference type="EC" id="2.3.1.275" evidence="1"/>
<dbReference type="EMBL" id="AP008971">
    <property type="protein sequence ID" value="BAG08271.1"/>
    <property type="molecule type" value="Genomic_DNA"/>
</dbReference>
<dbReference type="RefSeq" id="WP_012290666.1">
    <property type="nucleotide sequence ID" value="NC_010376.1"/>
</dbReference>
<dbReference type="SMR" id="B0S1N1"/>
<dbReference type="STRING" id="334413.FMG_0853"/>
<dbReference type="KEGG" id="fma:FMG_0853"/>
<dbReference type="eggNOG" id="COG0344">
    <property type="taxonomic scope" value="Bacteria"/>
</dbReference>
<dbReference type="HOGENOM" id="CLU_081254_4_0_9"/>
<dbReference type="UniPathway" id="UPA00085"/>
<dbReference type="Proteomes" id="UP000001319">
    <property type="component" value="Chromosome"/>
</dbReference>
<dbReference type="GO" id="GO:0005886">
    <property type="term" value="C:plasma membrane"/>
    <property type="evidence" value="ECO:0007669"/>
    <property type="project" value="UniProtKB-SubCell"/>
</dbReference>
<dbReference type="GO" id="GO:0043772">
    <property type="term" value="F:acyl-phosphate glycerol-3-phosphate acyltransferase activity"/>
    <property type="evidence" value="ECO:0007669"/>
    <property type="project" value="UniProtKB-UniRule"/>
</dbReference>
<dbReference type="GO" id="GO:0008654">
    <property type="term" value="P:phospholipid biosynthetic process"/>
    <property type="evidence" value="ECO:0007669"/>
    <property type="project" value="UniProtKB-UniRule"/>
</dbReference>
<dbReference type="HAMAP" id="MF_01043">
    <property type="entry name" value="PlsY"/>
    <property type="match status" value="1"/>
</dbReference>
<dbReference type="InterPro" id="IPR003811">
    <property type="entry name" value="G3P_acylTferase_PlsY"/>
</dbReference>
<dbReference type="NCBIfam" id="TIGR00023">
    <property type="entry name" value="glycerol-3-phosphate 1-O-acyltransferase PlsY"/>
    <property type="match status" value="1"/>
</dbReference>
<dbReference type="PANTHER" id="PTHR30309:SF0">
    <property type="entry name" value="GLYCEROL-3-PHOSPHATE ACYLTRANSFERASE-RELATED"/>
    <property type="match status" value="1"/>
</dbReference>
<dbReference type="PANTHER" id="PTHR30309">
    <property type="entry name" value="INNER MEMBRANE PROTEIN YGIH"/>
    <property type="match status" value="1"/>
</dbReference>
<dbReference type="Pfam" id="PF02660">
    <property type="entry name" value="G3P_acyltransf"/>
    <property type="match status" value="1"/>
</dbReference>
<dbReference type="SMART" id="SM01207">
    <property type="entry name" value="G3P_acyltransf"/>
    <property type="match status" value="1"/>
</dbReference>
<evidence type="ECO:0000255" key="1">
    <source>
        <dbReference type="HAMAP-Rule" id="MF_01043"/>
    </source>
</evidence>
<proteinExistence type="inferred from homology"/>
<feature type="chain" id="PRO_1000136091" description="Glycerol-3-phosphate acyltransferase">
    <location>
        <begin position="1"/>
        <end position="198"/>
    </location>
</feature>
<feature type="transmembrane region" description="Helical" evidence="1">
    <location>
        <begin position="5"/>
        <end position="25"/>
    </location>
</feature>
<feature type="transmembrane region" description="Helical" evidence="1">
    <location>
        <begin position="55"/>
        <end position="75"/>
    </location>
</feature>
<feature type="transmembrane region" description="Helical" evidence="1">
    <location>
        <begin position="79"/>
        <end position="99"/>
    </location>
</feature>
<feature type="transmembrane region" description="Helical" evidence="1">
    <location>
        <begin position="114"/>
        <end position="134"/>
    </location>
</feature>
<feature type="transmembrane region" description="Helical" evidence="1">
    <location>
        <begin position="139"/>
        <end position="159"/>
    </location>
</feature>
<feature type="transmembrane region" description="Helical" evidence="1">
    <location>
        <begin position="164"/>
        <end position="184"/>
    </location>
</feature>
<reference key="1">
    <citation type="journal article" date="2008" name="DNA Res.">
        <title>Complete genome sequence of Finegoldia magna, an anaerobic opportunistic pathogen.</title>
        <authorList>
            <person name="Goto T."/>
            <person name="Yamashita A."/>
            <person name="Hirakawa H."/>
            <person name="Matsutani M."/>
            <person name="Todo K."/>
            <person name="Ohshima K."/>
            <person name="Toh H."/>
            <person name="Miyamoto K."/>
            <person name="Kuhara S."/>
            <person name="Hattori M."/>
            <person name="Shimizu T."/>
            <person name="Akimoto S."/>
        </authorList>
    </citation>
    <scope>NUCLEOTIDE SEQUENCE [LARGE SCALE GENOMIC DNA]</scope>
    <source>
        <strain>ATCC 29328 / DSM 20472 / WAL 2508</strain>
    </source>
</reference>
<accession>B0S1N1</accession>
<organism>
    <name type="scientific">Finegoldia magna (strain ATCC 29328 / DSM 20472 / WAL 2508)</name>
    <name type="common">Peptostreptococcus magnus</name>
    <dbReference type="NCBI Taxonomy" id="334413"/>
    <lineage>
        <taxon>Bacteria</taxon>
        <taxon>Bacillati</taxon>
        <taxon>Bacillota</taxon>
        <taxon>Tissierellia</taxon>
        <taxon>Tissierellales</taxon>
        <taxon>Peptoniphilaceae</taxon>
        <taxon>Finegoldia</taxon>
    </lineage>
</organism>
<protein>
    <recommendedName>
        <fullName evidence="1">Glycerol-3-phosphate acyltransferase</fullName>
    </recommendedName>
    <alternativeName>
        <fullName evidence="1">Acyl-PO4 G3P acyltransferase</fullName>
    </alternativeName>
    <alternativeName>
        <fullName evidence="1">Acyl-phosphate--glycerol-3-phosphate acyltransferase</fullName>
    </alternativeName>
    <alternativeName>
        <fullName evidence="1">G3P acyltransferase</fullName>
        <shortName evidence="1">GPAT</shortName>
        <ecNumber evidence="1">2.3.1.275</ecNumber>
    </alternativeName>
    <alternativeName>
        <fullName evidence="1">Lysophosphatidic acid synthase</fullName>
        <shortName evidence="1">LPA synthase</shortName>
    </alternativeName>
</protein>